<name>SSRP_BIFLS</name>
<evidence type="ECO:0000255" key="1">
    <source>
        <dbReference type="HAMAP-Rule" id="MF_00023"/>
    </source>
</evidence>
<comment type="function">
    <text evidence="1">Required for rescue of stalled ribosomes mediated by trans-translation. Binds to transfer-messenger RNA (tmRNA), required for stable association of tmRNA with ribosomes. tmRNA and SmpB together mimic tRNA shape, replacing the anticodon stem-loop with SmpB. tmRNA is encoded by the ssrA gene; the 2 termini fold to resemble tRNA(Ala) and it encodes a 'tag peptide', a short internal open reading frame. During trans-translation Ala-aminoacylated tmRNA acts like a tRNA, entering the A-site of stalled ribosomes, displacing the stalled mRNA. The ribosome then switches to translate the ORF on the tmRNA; the nascent peptide is terminated with the 'tag peptide' encoded by the tmRNA and targeted for degradation. The ribosome is freed to recommence translation, which seems to be the essential function of trans-translation.</text>
</comment>
<comment type="subcellular location">
    <subcellularLocation>
        <location evidence="1">Cytoplasm</location>
    </subcellularLocation>
    <text evidence="1">The tmRNA-SmpB complex associates with stalled 70S ribosomes.</text>
</comment>
<comment type="similarity">
    <text evidence="1">Belongs to the SmpB family.</text>
</comment>
<proteinExistence type="inferred from homology"/>
<gene>
    <name evidence="1" type="primary">smpB</name>
    <name type="ordered locus">Blon_2023</name>
    <name type="ordered locus">BLIJ_2099</name>
</gene>
<organism>
    <name type="scientific">Bifidobacterium longum subsp. infantis (strain ATCC 15697 / DSM 20088 / JCM 1222 / NCTC 11817 / S12)</name>
    <dbReference type="NCBI Taxonomy" id="391904"/>
    <lineage>
        <taxon>Bacteria</taxon>
        <taxon>Bacillati</taxon>
        <taxon>Actinomycetota</taxon>
        <taxon>Actinomycetes</taxon>
        <taxon>Bifidobacteriales</taxon>
        <taxon>Bifidobacteriaceae</taxon>
        <taxon>Bifidobacterium</taxon>
    </lineage>
</organism>
<accession>B7GUE4</accession>
<accession>E8MMA0</accession>
<keyword id="KW-0963">Cytoplasm</keyword>
<keyword id="KW-0694">RNA-binding</keyword>
<protein>
    <recommendedName>
        <fullName evidence="1">SsrA-binding protein</fullName>
    </recommendedName>
    <alternativeName>
        <fullName evidence="1">Small protein B</fullName>
    </alternativeName>
</protein>
<reference key="1">
    <citation type="journal article" date="2008" name="Proc. Natl. Acad. Sci. U.S.A.">
        <title>The genome sequence of Bifidobacterium longum subsp. infantis reveals adaptations for milk utilization within the infant microbiome.</title>
        <authorList>
            <person name="Sela D.A."/>
            <person name="Chapman J."/>
            <person name="Adeuya A."/>
            <person name="Kim J.H."/>
            <person name="Chen F."/>
            <person name="Whitehead T.R."/>
            <person name="Lapidus A."/>
            <person name="Rokhsar D.S."/>
            <person name="Lebrilla C.B."/>
            <person name="German J.B."/>
            <person name="Price N.P."/>
            <person name="Richardson P.M."/>
            <person name="Mills D.A."/>
        </authorList>
    </citation>
    <scope>NUCLEOTIDE SEQUENCE [LARGE SCALE GENOMIC DNA]</scope>
    <source>
        <strain>ATCC 15697 / DSM 20088 / JCM 1222 / NCTC 11817 / S12</strain>
    </source>
</reference>
<reference key="2">
    <citation type="journal article" date="2011" name="Nature">
        <title>Bifidobacteria can protect from enteropathogenic infection through production of acetate.</title>
        <authorList>
            <person name="Fukuda S."/>
            <person name="Toh H."/>
            <person name="Hase K."/>
            <person name="Oshima K."/>
            <person name="Nakanishi Y."/>
            <person name="Yoshimura K."/>
            <person name="Tobe T."/>
            <person name="Clarke J.M."/>
            <person name="Topping D.L."/>
            <person name="Suzuki T."/>
            <person name="Taylor T.D."/>
            <person name="Itoh K."/>
            <person name="Kikuchi J."/>
            <person name="Morita H."/>
            <person name="Hattori M."/>
            <person name="Ohno H."/>
        </authorList>
    </citation>
    <scope>NUCLEOTIDE SEQUENCE [LARGE SCALE GENOMIC DNA]</scope>
    <source>
        <strain>ATCC 15697 / DSM 20088 / JCM 1222 / NCTC 11817 / S12</strain>
    </source>
</reference>
<dbReference type="EMBL" id="CP001095">
    <property type="protein sequence ID" value="ACJ53090.1"/>
    <property type="molecule type" value="Genomic_DNA"/>
</dbReference>
<dbReference type="EMBL" id="AP010889">
    <property type="protein sequence ID" value="BAJ69677.1"/>
    <property type="molecule type" value="Genomic_DNA"/>
</dbReference>
<dbReference type="RefSeq" id="WP_007051292.1">
    <property type="nucleotide sequence ID" value="NZ_JDTT01000005.1"/>
</dbReference>
<dbReference type="SMR" id="B7GUE4"/>
<dbReference type="GeneID" id="69577672"/>
<dbReference type="KEGG" id="bln:Blon_2023"/>
<dbReference type="KEGG" id="blon:BLIJ_2099"/>
<dbReference type="PATRIC" id="fig|391904.8.peg.2105"/>
<dbReference type="HOGENOM" id="CLU_108953_2_1_11"/>
<dbReference type="Proteomes" id="UP000001360">
    <property type="component" value="Chromosome"/>
</dbReference>
<dbReference type="GO" id="GO:0005829">
    <property type="term" value="C:cytosol"/>
    <property type="evidence" value="ECO:0007669"/>
    <property type="project" value="TreeGrafter"/>
</dbReference>
<dbReference type="GO" id="GO:0003723">
    <property type="term" value="F:RNA binding"/>
    <property type="evidence" value="ECO:0007669"/>
    <property type="project" value="UniProtKB-UniRule"/>
</dbReference>
<dbReference type="GO" id="GO:0070929">
    <property type="term" value="P:trans-translation"/>
    <property type="evidence" value="ECO:0007669"/>
    <property type="project" value="UniProtKB-UniRule"/>
</dbReference>
<dbReference type="CDD" id="cd09294">
    <property type="entry name" value="SmpB"/>
    <property type="match status" value="1"/>
</dbReference>
<dbReference type="Gene3D" id="2.40.280.10">
    <property type="match status" value="1"/>
</dbReference>
<dbReference type="HAMAP" id="MF_00023">
    <property type="entry name" value="SmpB"/>
    <property type="match status" value="1"/>
</dbReference>
<dbReference type="InterPro" id="IPR023620">
    <property type="entry name" value="SmpB"/>
</dbReference>
<dbReference type="InterPro" id="IPR000037">
    <property type="entry name" value="SsrA-bd_prot"/>
</dbReference>
<dbReference type="InterPro" id="IPR020081">
    <property type="entry name" value="SsrA-bd_prot_CS"/>
</dbReference>
<dbReference type="NCBIfam" id="NF003843">
    <property type="entry name" value="PRK05422.1"/>
    <property type="match status" value="1"/>
</dbReference>
<dbReference type="NCBIfam" id="TIGR00086">
    <property type="entry name" value="smpB"/>
    <property type="match status" value="1"/>
</dbReference>
<dbReference type="PANTHER" id="PTHR30308:SF2">
    <property type="entry name" value="SSRA-BINDING PROTEIN"/>
    <property type="match status" value="1"/>
</dbReference>
<dbReference type="PANTHER" id="PTHR30308">
    <property type="entry name" value="TMRNA-BINDING COMPONENT OF TRANS-TRANSLATION TAGGING COMPLEX"/>
    <property type="match status" value="1"/>
</dbReference>
<dbReference type="Pfam" id="PF01668">
    <property type="entry name" value="SmpB"/>
    <property type="match status" value="1"/>
</dbReference>
<dbReference type="SUPFAM" id="SSF74982">
    <property type="entry name" value="Small protein B (SmpB)"/>
    <property type="match status" value="1"/>
</dbReference>
<dbReference type="PROSITE" id="PS01317">
    <property type="entry name" value="SSRP"/>
    <property type="match status" value="1"/>
</dbReference>
<sequence>MPKETGEKLIVQNKKARHDYAIEDKYEAGLALTGTEVKSLREGRASLSEAFISIDRRGEMWLEGANIPEYLNGTWNNHAPKRKRKLLLHRLQITKLARGIEAKGYTIVPLSLYFKDGRVKAEIALARGKKEFDKRQALREEQDKREALRAMRYANMRH</sequence>
<feature type="chain" id="PRO_1000197608" description="SsrA-binding protein">
    <location>
        <begin position="1"/>
        <end position="158"/>
    </location>
</feature>